<organism>
    <name type="scientific">Oceanobacillus iheyensis (strain DSM 14371 / CIP 107618 / JCM 11309 / KCTC 3954 / HTE831)</name>
    <dbReference type="NCBI Taxonomy" id="221109"/>
    <lineage>
        <taxon>Bacteria</taxon>
        <taxon>Bacillati</taxon>
        <taxon>Bacillota</taxon>
        <taxon>Bacilli</taxon>
        <taxon>Bacillales</taxon>
        <taxon>Bacillaceae</taxon>
        <taxon>Oceanobacillus</taxon>
    </lineage>
</organism>
<sequence length="400" mass="45596">MNYDHILIRYGEMALKGKNIKQFIIKLQENIQQKIKHFEGVKVKRTQGRMFVLLNGNEPEPIIEKLKNVFGIHSLSIAIRVENTEEQIKEGALYALKREANAKTFKVTVKRISKDFPIPSQQMNQILGGHLLANTNDITVNVHEPDVEVRVEIRKEATYITSGTIRCRGGLPVGTSGKSLLLLSGGIDSPVAGFLAMKRGVQLEAIHFHSPPFTSERAKQKVLDLTQTLTKYGKSIKVHIVPFTKLQQEIFREMPNDYAMTIMRRMMFRISERICEQEEILSLTTGENLGQVASQTMQSMHTINEVTNYPIIRPLISMDKQEVIEVSQEIGTYETSIQPYEDCCTIFVPKSPKTKPKREKVNYYESHHDFTPTMEETINGIETVKITDKTVIDQSFKDLL</sequence>
<evidence type="ECO:0000255" key="1">
    <source>
        <dbReference type="HAMAP-Rule" id="MF_00021"/>
    </source>
</evidence>
<reference key="1">
    <citation type="journal article" date="2002" name="Nucleic Acids Res.">
        <title>Genome sequence of Oceanobacillus iheyensis isolated from the Iheya Ridge and its unexpected adaptive capabilities to extreme environments.</title>
        <authorList>
            <person name="Takami H."/>
            <person name="Takaki Y."/>
            <person name="Uchiyama I."/>
        </authorList>
    </citation>
    <scope>NUCLEOTIDE SEQUENCE [LARGE SCALE GENOMIC DNA]</scope>
    <source>
        <strain>DSM 14371 / CIP 107618 / JCM 11309 / KCTC 3954 / HTE831</strain>
    </source>
</reference>
<feature type="chain" id="PRO_0000154853" description="Probable tRNA sulfurtransferase">
    <location>
        <begin position="1"/>
        <end position="400"/>
    </location>
</feature>
<feature type="domain" description="THUMP" evidence="1">
    <location>
        <begin position="60"/>
        <end position="164"/>
    </location>
</feature>
<feature type="binding site" evidence="1">
    <location>
        <begin position="182"/>
        <end position="183"/>
    </location>
    <ligand>
        <name>ATP</name>
        <dbReference type="ChEBI" id="CHEBI:30616"/>
    </ligand>
</feature>
<feature type="binding site" evidence="1">
    <location>
        <begin position="207"/>
        <end position="208"/>
    </location>
    <ligand>
        <name>ATP</name>
        <dbReference type="ChEBI" id="CHEBI:30616"/>
    </ligand>
</feature>
<feature type="binding site" evidence="1">
    <location>
        <position position="264"/>
    </location>
    <ligand>
        <name>ATP</name>
        <dbReference type="ChEBI" id="CHEBI:30616"/>
    </ligand>
</feature>
<feature type="binding site" evidence="1">
    <location>
        <position position="286"/>
    </location>
    <ligand>
        <name>ATP</name>
        <dbReference type="ChEBI" id="CHEBI:30616"/>
    </ligand>
</feature>
<feature type="binding site" evidence="1">
    <location>
        <position position="295"/>
    </location>
    <ligand>
        <name>ATP</name>
        <dbReference type="ChEBI" id="CHEBI:30616"/>
    </ligand>
</feature>
<keyword id="KW-0067">ATP-binding</keyword>
<keyword id="KW-0963">Cytoplasm</keyword>
<keyword id="KW-0547">Nucleotide-binding</keyword>
<keyword id="KW-1185">Reference proteome</keyword>
<keyword id="KW-0694">RNA-binding</keyword>
<keyword id="KW-0784">Thiamine biosynthesis</keyword>
<keyword id="KW-0808">Transferase</keyword>
<keyword id="KW-0820">tRNA-binding</keyword>
<dbReference type="EC" id="2.8.1.4" evidence="1"/>
<dbReference type="EMBL" id="BA000028">
    <property type="protein sequence ID" value="BAC14154.1"/>
    <property type="molecule type" value="Genomic_DNA"/>
</dbReference>
<dbReference type="RefSeq" id="WP_011066592.1">
    <property type="nucleotide sequence ID" value="NC_004193.1"/>
</dbReference>
<dbReference type="SMR" id="Q8EPB3"/>
<dbReference type="STRING" id="221109.gene:10734446"/>
<dbReference type="KEGG" id="oih:OB2198"/>
<dbReference type="eggNOG" id="COG0301">
    <property type="taxonomic scope" value="Bacteria"/>
</dbReference>
<dbReference type="HOGENOM" id="CLU_037952_4_0_9"/>
<dbReference type="OrthoDB" id="9773948at2"/>
<dbReference type="PhylomeDB" id="Q8EPB3"/>
<dbReference type="UniPathway" id="UPA00060"/>
<dbReference type="Proteomes" id="UP000000822">
    <property type="component" value="Chromosome"/>
</dbReference>
<dbReference type="GO" id="GO:0005829">
    <property type="term" value="C:cytosol"/>
    <property type="evidence" value="ECO:0007669"/>
    <property type="project" value="TreeGrafter"/>
</dbReference>
<dbReference type="GO" id="GO:0005524">
    <property type="term" value="F:ATP binding"/>
    <property type="evidence" value="ECO:0007669"/>
    <property type="project" value="UniProtKB-UniRule"/>
</dbReference>
<dbReference type="GO" id="GO:0004810">
    <property type="term" value="F:CCA tRNA nucleotidyltransferase activity"/>
    <property type="evidence" value="ECO:0007669"/>
    <property type="project" value="InterPro"/>
</dbReference>
<dbReference type="GO" id="GO:0000049">
    <property type="term" value="F:tRNA binding"/>
    <property type="evidence" value="ECO:0007669"/>
    <property type="project" value="UniProtKB-UniRule"/>
</dbReference>
<dbReference type="GO" id="GO:0140741">
    <property type="term" value="F:tRNA-uracil-4 sulfurtransferase activity"/>
    <property type="evidence" value="ECO:0007669"/>
    <property type="project" value="UniProtKB-EC"/>
</dbReference>
<dbReference type="GO" id="GO:0009228">
    <property type="term" value="P:thiamine biosynthetic process"/>
    <property type="evidence" value="ECO:0007669"/>
    <property type="project" value="UniProtKB-KW"/>
</dbReference>
<dbReference type="GO" id="GO:0009229">
    <property type="term" value="P:thiamine diphosphate biosynthetic process"/>
    <property type="evidence" value="ECO:0007669"/>
    <property type="project" value="UniProtKB-UniRule"/>
</dbReference>
<dbReference type="GO" id="GO:0052837">
    <property type="term" value="P:thiazole biosynthetic process"/>
    <property type="evidence" value="ECO:0007669"/>
    <property type="project" value="TreeGrafter"/>
</dbReference>
<dbReference type="GO" id="GO:0002937">
    <property type="term" value="P:tRNA 4-thiouridine biosynthesis"/>
    <property type="evidence" value="ECO:0007669"/>
    <property type="project" value="TreeGrafter"/>
</dbReference>
<dbReference type="CDD" id="cd01712">
    <property type="entry name" value="PPase_ThiI"/>
    <property type="match status" value="1"/>
</dbReference>
<dbReference type="CDD" id="cd11716">
    <property type="entry name" value="THUMP_ThiI"/>
    <property type="match status" value="1"/>
</dbReference>
<dbReference type="FunFam" id="3.40.50.620:FF:000053">
    <property type="entry name" value="Probable tRNA sulfurtransferase"/>
    <property type="match status" value="1"/>
</dbReference>
<dbReference type="Gene3D" id="3.30.2130.30">
    <property type="match status" value="1"/>
</dbReference>
<dbReference type="Gene3D" id="3.40.50.620">
    <property type="entry name" value="HUPs"/>
    <property type="match status" value="1"/>
</dbReference>
<dbReference type="HAMAP" id="MF_00021">
    <property type="entry name" value="ThiI"/>
    <property type="match status" value="1"/>
</dbReference>
<dbReference type="InterPro" id="IPR014729">
    <property type="entry name" value="Rossmann-like_a/b/a_fold"/>
</dbReference>
<dbReference type="InterPro" id="IPR020536">
    <property type="entry name" value="ThiI_AANH"/>
</dbReference>
<dbReference type="InterPro" id="IPR054173">
    <property type="entry name" value="ThiI_fer"/>
</dbReference>
<dbReference type="InterPro" id="IPR049961">
    <property type="entry name" value="ThiI_N"/>
</dbReference>
<dbReference type="InterPro" id="IPR004114">
    <property type="entry name" value="THUMP_dom"/>
</dbReference>
<dbReference type="InterPro" id="IPR049962">
    <property type="entry name" value="THUMP_ThiI"/>
</dbReference>
<dbReference type="InterPro" id="IPR003720">
    <property type="entry name" value="tRNA_STrfase"/>
</dbReference>
<dbReference type="InterPro" id="IPR050102">
    <property type="entry name" value="tRNA_sulfurtransferase_ThiI"/>
</dbReference>
<dbReference type="NCBIfam" id="TIGR00342">
    <property type="entry name" value="tRNA uracil 4-sulfurtransferase ThiI"/>
    <property type="match status" value="1"/>
</dbReference>
<dbReference type="PANTHER" id="PTHR43209">
    <property type="entry name" value="TRNA SULFURTRANSFERASE"/>
    <property type="match status" value="1"/>
</dbReference>
<dbReference type="PANTHER" id="PTHR43209:SF1">
    <property type="entry name" value="TRNA SULFURTRANSFERASE"/>
    <property type="match status" value="1"/>
</dbReference>
<dbReference type="Pfam" id="PF02568">
    <property type="entry name" value="ThiI"/>
    <property type="match status" value="1"/>
</dbReference>
<dbReference type="Pfam" id="PF22025">
    <property type="entry name" value="ThiI_fer"/>
    <property type="match status" value="1"/>
</dbReference>
<dbReference type="Pfam" id="PF02926">
    <property type="entry name" value="THUMP"/>
    <property type="match status" value="1"/>
</dbReference>
<dbReference type="SMART" id="SM00981">
    <property type="entry name" value="THUMP"/>
    <property type="match status" value="1"/>
</dbReference>
<dbReference type="SUPFAM" id="SSF52402">
    <property type="entry name" value="Adenine nucleotide alpha hydrolases-like"/>
    <property type="match status" value="1"/>
</dbReference>
<dbReference type="SUPFAM" id="SSF143437">
    <property type="entry name" value="THUMP domain-like"/>
    <property type="match status" value="1"/>
</dbReference>
<dbReference type="PROSITE" id="PS51165">
    <property type="entry name" value="THUMP"/>
    <property type="match status" value="1"/>
</dbReference>
<name>THII_OCEIH</name>
<comment type="function">
    <text evidence="1">Catalyzes the ATP-dependent transfer of a sulfur to tRNA to produce 4-thiouridine in position 8 of tRNAs, which functions as a near-UV photosensor. Also catalyzes the transfer of sulfur to the sulfur carrier protein ThiS, forming ThiS-thiocarboxylate. This is a step in the synthesis of thiazole, in the thiamine biosynthesis pathway. The sulfur is donated as persulfide by IscS.</text>
</comment>
<comment type="catalytic activity">
    <reaction evidence="1">
        <text>[ThiI sulfur-carrier protein]-S-sulfanyl-L-cysteine + a uridine in tRNA + 2 reduced [2Fe-2S]-[ferredoxin] + ATP + H(+) = [ThiI sulfur-carrier protein]-L-cysteine + a 4-thiouridine in tRNA + 2 oxidized [2Fe-2S]-[ferredoxin] + AMP + diphosphate</text>
        <dbReference type="Rhea" id="RHEA:24176"/>
        <dbReference type="Rhea" id="RHEA-COMP:10000"/>
        <dbReference type="Rhea" id="RHEA-COMP:10001"/>
        <dbReference type="Rhea" id="RHEA-COMP:13337"/>
        <dbReference type="Rhea" id="RHEA-COMP:13338"/>
        <dbReference type="Rhea" id="RHEA-COMP:13339"/>
        <dbReference type="Rhea" id="RHEA-COMP:13340"/>
        <dbReference type="ChEBI" id="CHEBI:15378"/>
        <dbReference type="ChEBI" id="CHEBI:29950"/>
        <dbReference type="ChEBI" id="CHEBI:30616"/>
        <dbReference type="ChEBI" id="CHEBI:33019"/>
        <dbReference type="ChEBI" id="CHEBI:33737"/>
        <dbReference type="ChEBI" id="CHEBI:33738"/>
        <dbReference type="ChEBI" id="CHEBI:61963"/>
        <dbReference type="ChEBI" id="CHEBI:65315"/>
        <dbReference type="ChEBI" id="CHEBI:136798"/>
        <dbReference type="ChEBI" id="CHEBI:456215"/>
        <dbReference type="EC" id="2.8.1.4"/>
    </reaction>
</comment>
<comment type="catalytic activity">
    <reaction evidence="1">
        <text>[ThiS sulfur-carrier protein]-C-terminal Gly-Gly-AMP + S-sulfanyl-L-cysteinyl-[cysteine desulfurase] + AH2 = [ThiS sulfur-carrier protein]-C-terminal-Gly-aminoethanethioate + L-cysteinyl-[cysteine desulfurase] + A + AMP + 2 H(+)</text>
        <dbReference type="Rhea" id="RHEA:43340"/>
        <dbReference type="Rhea" id="RHEA-COMP:12157"/>
        <dbReference type="Rhea" id="RHEA-COMP:12158"/>
        <dbReference type="Rhea" id="RHEA-COMP:12910"/>
        <dbReference type="Rhea" id="RHEA-COMP:19908"/>
        <dbReference type="ChEBI" id="CHEBI:13193"/>
        <dbReference type="ChEBI" id="CHEBI:15378"/>
        <dbReference type="ChEBI" id="CHEBI:17499"/>
        <dbReference type="ChEBI" id="CHEBI:29950"/>
        <dbReference type="ChEBI" id="CHEBI:61963"/>
        <dbReference type="ChEBI" id="CHEBI:90618"/>
        <dbReference type="ChEBI" id="CHEBI:232372"/>
        <dbReference type="ChEBI" id="CHEBI:456215"/>
    </reaction>
</comment>
<comment type="pathway">
    <text evidence="1">Cofactor biosynthesis; thiamine diphosphate biosynthesis.</text>
</comment>
<comment type="subcellular location">
    <subcellularLocation>
        <location evidence="1">Cytoplasm</location>
    </subcellularLocation>
</comment>
<comment type="similarity">
    <text evidence="1">Belongs to the ThiI family.</text>
</comment>
<accession>Q8EPB3</accession>
<protein>
    <recommendedName>
        <fullName evidence="1">Probable tRNA sulfurtransferase</fullName>
        <ecNumber evidence="1">2.8.1.4</ecNumber>
    </recommendedName>
    <alternativeName>
        <fullName evidence="1">Sulfur carrier protein ThiS sulfurtransferase</fullName>
    </alternativeName>
    <alternativeName>
        <fullName evidence="1">Thiamine biosynthesis protein ThiI</fullName>
    </alternativeName>
    <alternativeName>
        <fullName evidence="1">tRNA 4-thiouridine synthase</fullName>
    </alternativeName>
</protein>
<proteinExistence type="inferred from homology"/>
<gene>
    <name evidence="1" type="primary">thiI</name>
    <name type="ordered locus">OB2198</name>
</gene>